<comment type="subcellular location">
    <subcellularLocation>
        <location evidence="2">Membrane</location>
        <topology evidence="2">Single-pass membrane protein</topology>
    </subcellularLocation>
</comment>
<keyword id="KW-0472">Membrane</keyword>
<keyword id="KW-1185">Reference proteome</keyword>
<keyword id="KW-0812">Transmembrane</keyword>
<keyword id="KW-1133">Transmembrane helix</keyword>
<protein>
    <recommendedName>
        <fullName>Putative uncharacterized protein DDB_G0284397</fullName>
    </recommendedName>
</protein>
<dbReference type="EMBL" id="AAFI02000064">
    <property type="protein sequence ID" value="EAL65247.1"/>
    <property type="molecule type" value="Genomic_DNA"/>
</dbReference>
<dbReference type="RefSeq" id="XP_638606.1">
    <property type="nucleotide sequence ID" value="XM_633514.1"/>
</dbReference>
<dbReference type="PaxDb" id="44689-DDB0185991"/>
<dbReference type="EnsemblProtists" id="EAL65247">
    <property type="protein sequence ID" value="EAL65247"/>
    <property type="gene ID" value="DDB_G0284397"/>
</dbReference>
<dbReference type="GeneID" id="8624577"/>
<dbReference type="KEGG" id="ddi:DDB_G0284397"/>
<dbReference type="dictyBase" id="DDB_G0284397"/>
<dbReference type="VEuPathDB" id="AmoebaDB:DDB_G0284397"/>
<dbReference type="HOGENOM" id="CLU_1985750_0_0_1"/>
<dbReference type="InParanoid" id="Q54PP8"/>
<dbReference type="PRO" id="PR:Q54PP8"/>
<dbReference type="Proteomes" id="UP000002195">
    <property type="component" value="Chromosome 4"/>
</dbReference>
<dbReference type="GO" id="GO:0016020">
    <property type="term" value="C:membrane"/>
    <property type="evidence" value="ECO:0007669"/>
    <property type="project" value="UniProtKB-SubCell"/>
</dbReference>
<evidence type="ECO:0000255" key="1"/>
<evidence type="ECO:0000305" key="2"/>
<feature type="chain" id="PRO_0000350905" description="Putative uncharacterized protein DDB_G0284397">
    <location>
        <begin position="1"/>
        <end position="126"/>
    </location>
</feature>
<feature type="transmembrane region" description="Helical" evidence="1">
    <location>
        <begin position="55"/>
        <end position="77"/>
    </location>
</feature>
<proteinExistence type="predicted"/>
<accession>Q54PP8</accession>
<organism>
    <name type="scientific">Dictyostelium discoideum</name>
    <name type="common">Social amoeba</name>
    <dbReference type="NCBI Taxonomy" id="44689"/>
    <lineage>
        <taxon>Eukaryota</taxon>
        <taxon>Amoebozoa</taxon>
        <taxon>Evosea</taxon>
        <taxon>Eumycetozoa</taxon>
        <taxon>Dictyostelia</taxon>
        <taxon>Dictyosteliales</taxon>
        <taxon>Dictyosteliaceae</taxon>
        <taxon>Dictyostelium</taxon>
    </lineage>
</organism>
<name>Y5991_DICDI</name>
<sequence>MLISFEPFKVQDEAGIQGLVFKIIMRYYSYGLPRWFSKSNDFLSKRMSMHHLKHMLLINSNLVLSGLLLFIDVYRAATYSIFTMIRSLKRIFVDPFGIELLGLRDLRPTKGKLVERRQQHLTKIKN</sequence>
<gene>
    <name type="ORF">DDB_G0284397</name>
</gene>
<reference key="1">
    <citation type="journal article" date="2005" name="Nature">
        <title>The genome of the social amoeba Dictyostelium discoideum.</title>
        <authorList>
            <person name="Eichinger L."/>
            <person name="Pachebat J.A."/>
            <person name="Gloeckner G."/>
            <person name="Rajandream M.A."/>
            <person name="Sucgang R."/>
            <person name="Berriman M."/>
            <person name="Song J."/>
            <person name="Olsen R."/>
            <person name="Szafranski K."/>
            <person name="Xu Q."/>
            <person name="Tunggal B."/>
            <person name="Kummerfeld S."/>
            <person name="Madera M."/>
            <person name="Konfortov B.A."/>
            <person name="Rivero F."/>
            <person name="Bankier A.T."/>
            <person name="Lehmann R."/>
            <person name="Hamlin N."/>
            <person name="Davies R."/>
            <person name="Gaudet P."/>
            <person name="Fey P."/>
            <person name="Pilcher K."/>
            <person name="Chen G."/>
            <person name="Saunders D."/>
            <person name="Sodergren E.J."/>
            <person name="Davis P."/>
            <person name="Kerhornou A."/>
            <person name="Nie X."/>
            <person name="Hall N."/>
            <person name="Anjard C."/>
            <person name="Hemphill L."/>
            <person name="Bason N."/>
            <person name="Farbrother P."/>
            <person name="Desany B."/>
            <person name="Just E."/>
            <person name="Morio T."/>
            <person name="Rost R."/>
            <person name="Churcher C.M."/>
            <person name="Cooper J."/>
            <person name="Haydock S."/>
            <person name="van Driessche N."/>
            <person name="Cronin A."/>
            <person name="Goodhead I."/>
            <person name="Muzny D.M."/>
            <person name="Mourier T."/>
            <person name="Pain A."/>
            <person name="Lu M."/>
            <person name="Harper D."/>
            <person name="Lindsay R."/>
            <person name="Hauser H."/>
            <person name="James K.D."/>
            <person name="Quiles M."/>
            <person name="Madan Babu M."/>
            <person name="Saito T."/>
            <person name="Buchrieser C."/>
            <person name="Wardroper A."/>
            <person name="Felder M."/>
            <person name="Thangavelu M."/>
            <person name="Johnson D."/>
            <person name="Knights A."/>
            <person name="Loulseged H."/>
            <person name="Mungall K.L."/>
            <person name="Oliver K."/>
            <person name="Price C."/>
            <person name="Quail M.A."/>
            <person name="Urushihara H."/>
            <person name="Hernandez J."/>
            <person name="Rabbinowitsch E."/>
            <person name="Steffen D."/>
            <person name="Sanders M."/>
            <person name="Ma J."/>
            <person name="Kohara Y."/>
            <person name="Sharp S."/>
            <person name="Simmonds M.N."/>
            <person name="Spiegler S."/>
            <person name="Tivey A."/>
            <person name="Sugano S."/>
            <person name="White B."/>
            <person name="Walker D."/>
            <person name="Woodward J.R."/>
            <person name="Winckler T."/>
            <person name="Tanaka Y."/>
            <person name="Shaulsky G."/>
            <person name="Schleicher M."/>
            <person name="Weinstock G.M."/>
            <person name="Rosenthal A."/>
            <person name="Cox E.C."/>
            <person name="Chisholm R.L."/>
            <person name="Gibbs R.A."/>
            <person name="Loomis W.F."/>
            <person name="Platzer M."/>
            <person name="Kay R.R."/>
            <person name="Williams J.G."/>
            <person name="Dear P.H."/>
            <person name="Noegel A.A."/>
            <person name="Barrell B.G."/>
            <person name="Kuspa A."/>
        </authorList>
    </citation>
    <scope>NUCLEOTIDE SEQUENCE [LARGE SCALE GENOMIC DNA]</scope>
    <source>
        <strain>AX4</strain>
    </source>
</reference>